<proteinExistence type="evidence at protein level"/>
<reference key="1">
    <citation type="journal article" date="1995" name="Nature">
        <title>Facilitation of lin-12-mediated signalling by sel-12, a Caenorhabditis elegans S182 Alzheimer's disease gene.</title>
        <authorList>
            <person name="Levitan D."/>
            <person name="Greenwald I."/>
        </authorList>
    </citation>
    <scope>NUCLEOTIDE SEQUENCE [MRNA]</scope>
    <scope>MUTAGENESIS OF CYS-60</scope>
    <source>
        <strain>Bristol N2</strain>
    </source>
</reference>
<reference key="2">
    <citation type="submission" date="1996-01" db="EMBL/GenBank/DDBJ databases">
        <authorList>
            <person name="Levitan D."/>
        </authorList>
    </citation>
    <scope>SEQUENCE REVISION TO 84-85</scope>
</reference>
<reference key="3">
    <citation type="journal article" date="2000" name="Nature">
        <title>Presenilin is required for proper morphology and function of neurons in C. elegans.</title>
        <authorList>
            <person name="Wittenburg N."/>
            <person name="Eimer S."/>
            <person name="Lakowski B."/>
            <person name="Roehrig S."/>
            <person name="Rudolph C."/>
            <person name="Baumeister R."/>
        </authorList>
    </citation>
    <scope>NUCLEOTIDE SEQUENCE [MRNA]</scope>
    <scope>FUNCTION</scope>
    <scope>TISSUE SPECIFICITY</scope>
    <source>
        <strain>Bristol N2</strain>
    </source>
</reference>
<reference key="4">
    <citation type="journal article" date="1998" name="Science">
        <title>Genome sequence of the nematode C. elegans: a platform for investigating biology.</title>
        <authorList>
            <consortium name="The C. elegans sequencing consortium"/>
        </authorList>
    </citation>
    <scope>NUCLEOTIDE SEQUENCE [LARGE SCALE GENOMIC DNA]</scope>
    <source>
        <strain>Bristol N2</strain>
    </source>
</reference>
<reference key="5">
    <citation type="journal article" date="1998" name="Proc. Natl. Acad. Sci. U.S.A.">
        <title>Evidence for functional and physical association between Caenorhabditis elegans SEL-10, a Cdc4p-related protein, and SEL-12 presenilin.</title>
        <authorList>
            <person name="Wu G."/>
            <person name="Hubbard E.J.A."/>
            <person name="Kitajewski J.K."/>
            <person name="Greenwald I."/>
        </authorList>
    </citation>
    <scope>INTERACTION WITH SEL-10</scope>
</reference>
<reference key="6">
    <citation type="journal article" date="2002" name="Dev. Biol.">
        <title>The Caenorhabditis elegans presenilin sel-12 is required for mesodermal patterning and muscle function.</title>
        <authorList>
            <person name="Eimer S."/>
            <person name="Donhauser R."/>
            <person name="Baumeister R."/>
        </authorList>
    </citation>
    <scope>FUNCTION</scope>
    <scope>MUTAGENESIS OF CYS-60</scope>
</reference>
<reference key="7">
    <citation type="journal article" date="2003" name="Development">
        <title>Two suppressors of sel-12 encode C2H2 zinc-finger proteins that regulate presenilin transcription in Caenorhabditis elegans.</title>
        <authorList>
            <person name="Lakowski B."/>
            <person name="Eimer S."/>
            <person name="Goebel C."/>
            <person name="Boettcher A."/>
            <person name="Wagler B."/>
            <person name="Baumeister R."/>
        </authorList>
    </citation>
    <scope>DEVELOPMENTAL STAGE</scope>
</reference>
<reference key="8">
    <citation type="journal article" date="2016" name="Elife">
        <title>Boundary cells restrict dystroglycan trafficking to control basement membrane sliding during tissue remodeling.</title>
        <authorList>
            <person name="McClatchey S.T."/>
            <person name="Wang Z."/>
            <person name="Linden L.M."/>
            <person name="Hastie E.L."/>
            <person name="Wang L."/>
            <person name="Shen W."/>
            <person name="Chen A."/>
            <person name="Chi Q."/>
            <person name="Sherwood D.R."/>
        </authorList>
    </citation>
    <scope>FUNCTION</scope>
    <scope>MUTAGENESIS OF 134-TRP--TYR-444</scope>
</reference>
<sequence>MPSTRRQQEGGGADAETHTVYGTNLITNRNSQEDENVVEEAELKYGASHVIHLFVPVSLCMALVVFTMNTITFYSQNNGRHLLYTPFVRETDSIVEKGLMSLGNALVMLCVVVLMTVLLIVFYKYKFYKLIHGWLIVSSFLLLFLFTTIYVQEVLKSFDVSPSALLVLFGLGNYGVLGMMCIHWKGPLRLQQFYLITMSALMALVFIKYLPEWTVWFVLFVISVWDLVAVLTPKGPLRYLVETAQERNEPIFPALIYSSGVIYPYVLVTAVENTTDPREPTSSDSNTSTAFPGEASCSSETPKRPKVKRIPQKVQIESNTTASTTQNSGVRVERELAAERPTVQDANFHRHEEEERGVKLGLGDFIFYSVLLGKASSYFDWNTTIACYVAILIGLCFTLVLLAVFKRALPALPISIFSGLIFYFCTRWIITPFVTQVSQKCLLY</sequence>
<keyword id="KW-0256">Endoplasmic reticulum</keyword>
<keyword id="KW-0333">Golgi apparatus</keyword>
<keyword id="KW-0472">Membrane</keyword>
<keyword id="KW-0914">Notch signaling pathway</keyword>
<keyword id="KW-1185">Reference proteome</keyword>
<keyword id="KW-0812">Transmembrane</keyword>
<keyword id="KW-1133">Transmembrane helix</keyword>
<comment type="function">
    <text evidence="4 5 7">Probable catalytic subunit of the gamma-secretase complex, an endoprotease complex that catalyzes the intramembrane cleavage of integral membrane proteins such as Notch receptors (lin-12 or glp-1). Provides the major presenilin function compared to hop-1 and spe-4. Required cell-autonomously for correct neurite connectivity of the AIY cholinergic interneurons and their correct functioning in thermotaxis. Required for mesodermal patterning of muscle function. Promotes basement membrane gap formation during tissue remodeling (PubMed:27661254).</text>
</comment>
<comment type="subunit">
    <text evidence="9 10">Homodimer. Component of the gamma-secretase complex, a complex probably composed of the presenilin homodimer (sel-12, hop-1 or spe-4), nicastrin (aph-2), aph-1 and pen-2 (Probable). Interacts with sel-10 (PubMed:9861048).</text>
</comment>
<comment type="subcellular location">
    <subcellularLocation>
        <location evidence="1">Endoplasmic reticulum membrane</location>
        <topology evidence="1">Multi-pass membrane protein</topology>
    </subcellularLocation>
    <subcellularLocation>
        <location evidence="1">Golgi apparatus membrane</location>
        <topology evidence="1">Multi-pass membrane protein</topology>
    </subcellularLocation>
</comment>
<comment type="tissue specificity">
    <text evidence="4">Expressed in most neurons.</text>
</comment>
<comment type="developmental stage">
    <text evidence="6">Expressed both maternally and zygotically. Ubiquitously expressed throughout the development and in the adult.</text>
</comment>
<comment type="domain">
    <text evidence="1">The PAL motif is required for normal active site conformation.</text>
</comment>
<comment type="similarity">
    <text evidence="10">Belongs to the peptidase A22A family.</text>
</comment>
<comment type="sequence caution" evidence="10">
    <conflict type="frameshift">
        <sequence resource="EMBL-CDS" id="AAA85511"/>
    </conflict>
</comment>
<gene>
    <name evidence="11" type="primary">sel-12</name>
    <name evidence="11" type="ORF">F35H12.3</name>
</gene>
<name>PSN_CAEEL</name>
<protein>
    <recommendedName>
        <fullName>Presenilin sel-12</fullName>
    </recommendedName>
    <alternativeName>
        <fullName>Suppressor/enhancer of lin-12 protein 12</fullName>
    </alternativeName>
</protein>
<feature type="chain" id="PRO_0000073903" description="Presenilin sel-12">
    <location>
        <begin position="1"/>
        <end position="444"/>
    </location>
</feature>
<feature type="topological domain" description="Cytoplasmic" evidence="2">
    <location>
        <begin position="1"/>
        <end position="45"/>
    </location>
</feature>
<feature type="transmembrane region" description="Helical" evidence="2">
    <location>
        <begin position="46"/>
        <end position="66"/>
    </location>
</feature>
<feature type="topological domain" description="Lumenal" evidence="2">
    <location>
        <begin position="67"/>
        <end position="101"/>
    </location>
</feature>
<feature type="transmembrane region" description="Helical" evidence="2">
    <location>
        <begin position="102"/>
        <end position="122"/>
    </location>
</feature>
<feature type="topological domain" description="Cytoplasmic" evidence="2">
    <location>
        <begin position="123"/>
        <end position="130"/>
    </location>
</feature>
<feature type="transmembrane region" description="Helical" evidence="2">
    <location>
        <begin position="131"/>
        <end position="151"/>
    </location>
</feature>
<feature type="topological domain" description="Lumenal" evidence="2">
    <location>
        <begin position="152"/>
        <end position="163"/>
    </location>
</feature>
<feature type="transmembrane region" description="Helical" evidence="2">
    <location>
        <begin position="164"/>
        <end position="184"/>
    </location>
</feature>
<feature type="topological domain" description="Cytoplasmic" evidence="2">
    <location>
        <begin position="185"/>
        <end position="189"/>
    </location>
</feature>
<feature type="transmembrane region" description="Helical" evidence="2">
    <location>
        <begin position="190"/>
        <end position="210"/>
    </location>
</feature>
<feature type="topological domain" description="Lumenal" evidence="2">
    <location>
        <begin position="211"/>
        <end position="212"/>
    </location>
</feature>
<feature type="transmembrane region" description="Helical" evidence="2">
    <location>
        <begin position="213"/>
        <end position="233"/>
    </location>
</feature>
<feature type="topological domain" description="Cytoplasmic" evidence="2">
    <location>
        <begin position="234"/>
        <end position="359"/>
    </location>
</feature>
<feature type="transmembrane region" description="Helical" evidence="2">
    <location>
        <begin position="360"/>
        <end position="380"/>
    </location>
</feature>
<feature type="topological domain" description="Lumenal" evidence="2">
    <location>
        <begin position="381"/>
        <end position="384"/>
    </location>
</feature>
<feature type="transmembrane region" description="Helical" evidence="2">
    <location>
        <begin position="385"/>
        <end position="405"/>
    </location>
</feature>
<feature type="topological domain" description="Cytoplasmic" evidence="2">
    <location>
        <begin position="406"/>
        <end position="413"/>
    </location>
</feature>
<feature type="intramembrane region" description="Helical" evidence="2">
    <location>
        <begin position="414"/>
        <end position="434"/>
    </location>
</feature>
<feature type="topological domain" description="Cytoplasmic" evidence="2">
    <location>
        <begin position="435"/>
        <end position="444"/>
    </location>
</feature>
<feature type="region of interest" description="Disordered" evidence="3">
    <location>
        <begin position="275"/>
        <end position="331"/>
    </location>
</feature>
<feature type="short sequence motif" description="PAL">
    <location>
        <begin position="410"/>
        <end position="412"/>
    </location>
</feature>
<feature type="compositionally biased region" description="Polar residues" evidence="3">
    <location>
        <begin position="282"/>
        <end position="300"/>
    </location>
</feature>
<feature type="compositionally biased region" description="Polar residues" evidence="3">
    <location>
        <begin position="315"/>
        <end position="329"/>
    </location>
</feature>
<feature type="active site" evidence="1">
    <location>
        <position position="226"/>
    </location>
</feature>
<feature type="active site" evidence="1">
    <location>
        <position position="364"/>
    </location>
</feature>
<feature type="mutagenesis site" description="In ar131; egg-laying-defective." evidence="5 8">
    <original>C</original>
    <variation>S</variation>
    <location>
        <position position="60"/>
    </location>
</feature>
<feature type="mutagenesis site" description="In ty11; reduces the size of the openings in the basement membranes that underlie epithelial cells." evidence="7">
    <location>
        <begin position="134"/>
        <end position="444"/>
    </location>
</feature>
<dbReference type="EMBL" id="U35660">
    <property type="protein sequence ID" value="AAA85511.1"/>
    <property type="status" value="ALT_FRAME"/>
    <property type="molecule type" value="mRNA"/>
</dbReference>
<dbReference type="EMBL" id="AF171064">
    <property type="protein sequence ID" value="AAD50991.1"/>
    <property type="molecule type" value="mRNA"/>
</dbReference>
<dbReference type="EMBL" id="BX284606">
    <property type="protein sequence ID" value="CCD70617.1"/>
    <property type="molecule type" value="Genomic_DNA"/>
</dbReference>
<dbReference type="RefSeq" id="NP_508175.1">
    <property type="nucleotide sequence ID" value="NM_075774.7"/>
</dbReference>
<dbReference type="SMR" id="P52166"/>
<dbReference type="BioGRID" id="45394">
    <property type="interactions" value="57"/>
</dbReference>
<dbReference type="FunCoup" id="P52166">
    <property type="interactions" value="2644"/>
</dbReference>
<dbReference type="STRING" id="6239.F35H12.3.1"/>
<dbReference type="MEROPS" id="A22.009"/>
<dbReference type="PaxDb" id="6239-F35H12.3"/>
<dbReference type="EnsemblMetazoa" id="F35H12.3.1">
    <property type="protein sequence ID" value="F35H12.3.1"/>
    <property type="gene ID" value="WBGene00004769"/>
</dbReference>
<dbReference type="GeneID" id="180441"/>
<dbReference type="KEGG" id="cel:CELE_F35H12.3"/>
<dbReference type="UCSC" id="F35H12.3">
    <property type="organism name" value="c. elegans"/>
</dbReference>
<dbReference type="AGR" id="WB:WBGene00004769"/>
<dbReference type="CTD" id="180441"/>
<dbReference type="WormBase" id="F35H12.3">
    <property type="protein sequence ID" value="CE24946"/>
    <property type="gene ID" value="WBGene00004769"/>
    <property type="gene designation" value="sel-12"/>
</dbReference>
<dbReference type="eggNOG" id="KOG2736">
    <property type="taxonomic scope" value="Eukaryota"/>
</dbReference>
<dbReference type="GeneTree" id="ENSGT00940000174002"/>
<dbReference type="HOGENOM" id="CLU_022975_3_0_1"/>
<dbReference type="InParanoid" id="P52166"/>
<dbReference type="OMA" id="MYYQDID"/>
<dbReference type="OrthoDB" id="20287at2759"/>
<dbReference type="PhylomeDB" id="P52166"/>
<dbReference type="Reactome" id="R-CEL-1251985">
    <property type="pathway name" value="Nuclear signaling by ERBB4"/>
</dbReference>
<dbReference type="Reactome" id="R-CEL-3928665">
    <property type="pathway name" value="EPH-ephrin mediated repulsion of cells"/>
</dbReference>
<dbReference type="SignaLink" id="P52166"/>
<dbReference type="PRO" id="PR:P52166"/>
<dbReference type="Proteomes" id="UP000001940">
    <property type="component" value="Chromosome X"/>
</dbReference>
<dbReference type="Bgee" id="WBGene00004769">
    <property type="expression patterns" value="Expressed in pharyngeal muscle cell (C elegans) and 4 other cell types or tissues"/>
</dbReference>
<dbReference type="GO" id="GO:0005789">
    <property type="term" value="C:endoplasmic reticulum membrane"/>
    <property type="evidence" value="ECO:0007669"/>
    <property type="project" value="UniProtKB-SubCell"/>
</dbReference>
<dbReference type="GO" id="GO:0070765">
    <property type="term" value="C:gamma-secretase complex"/>
    <property type="evidence" value="ECO:0000250"/>
    <property type="project" value="WormBase"/>
</dbReference>
<dbReference type="GO" id="GO:0000139">
    <property type="term" value="C:Golgi membrane"/>
    <property type="evidence" value="ECO:0007669"/>
    <property type="project" value="UniProtKB-SubCell"/>
</dbReference>
<dbReference type="GO" id="GO:0048471">
    <property type="term" value="C:perinuclear region of cytoplasm"/>
    <property type="evidence" value="ECO:0000314"/>
    <property type="project" value="WormBase"/>
</dbReference>
<dbReference type="GO" id="GO:0042500">
    <property type="term" value="F:aspartic endopeptidase activity, intramembrane cleaving"/>
    <property type="evidence" value="ECO:0007669"/>
    <property type="project" value="InterPro"/>
</dbReference>
<dbReference type="GO" id="GO:0004175">
    <property type="term" value="F:endopeptidase activity"/>
    <property type="evidence" value="ECO:0000318"/>
    <property type="project" value="GO_Central"/>
</dbReference>
<dbReference type="GO" id="GO:0034205">
    <property type="term" value="P:amyloid-beta formation"/>
    <property type="evidence" value="ECO:0000318"/>
    <property type="project" value="GO_Central"/>
</dbReference>
<dbReference type="GO" id="GO:0045176">
    <property type="term" value="P:apical protein localization"/>
    <property type="evidence" value="ECO:0000314"/>
    <property type="project" value="WormBase"/>
</dbReference>
<dbReference type="GO" id="GO:0055074">
    <property type="term" value="P:calcium ion homeostasis"/>
    <property type="evidence" value="ECO:0000318"/>
    <property type="project" value="GO_Central"/>
</dbReference>
<dbReference type="GO" id="GO:0001708">
    <property type="term" value="P:cell fate specification"/>
    <property type="evidence" value="ECO:0000315"/>
    <property type="project" value="WormBase"/>
</dbReference>
<dbReference type="GO" id="GO:0048858">
    <property type="term" value="P:cell projection morphogenesis"/>
    <property type="evidence" value="ECO:0000315"/>
    <property type="project" value="UniProtKB"/>
</dbReference>
<dbReference type="GO" id="GO:0016048">
    <property type="term" value="P:detection of temperature stimulus"/>
    <property type="evidence" value="ECO:0000315"/>
    <property type="project" value="UniProtKB"/>
</dbReference>
<dbReference type="GO" id="GO:0018991">
    <property type="term" value="P:egg-laying behavior"/>
    <property type="evidence" value="ECO:0000315"/>
    <property type="project" value="WormBase"/>
</dbReference>
<dbReference type="GO" id="GO:0006509">
    <property type="term" value="P:membrane protein ectodomain proteolysis"/>
    <property type="evidence" value="ECO:0000318"/>
    <property type="project" value="GO_Central"/>
</dbReference>
<dbReference type="GO" id="GO:0007399">
    <property type="term" value="P:nervous system development"/>
    <property type="evidence" value="ECO:0000315"/>
    <property type="project" value="UniProtKB"/>
</dbReference>
<dbReference type="GO" id="GO:0007219">
    <property type="term" value="P:Notch signaling pathway"/>
    <property type="evidence" value="ECO:0000318"/>
    <property type="project" value="GO_Central"/>
</dbReference>
<dbReference type="GO" id="GO:0045747">
    <property type="term" value="P:positive regulation of Notch signaling pathway"/>
    <property type="evidence" value="ECO:0000316"/>
    <property type="project" value="WormBase"/>
</dbReference>
<dbReference type="GO" id="GO:0016485">
    <property type="term" value="P:protein processing"/>
    <property type="evidence" value="ECO:0000318"/>
    <property type="project" value="GO_Central"/>
</dbReference>
<dbReference type="GO" id="GO:0022603">
    <property type="term" value="P:regulation of anatomical structure morphogenesis"/>
    <property type="evidence" value="ECO:0000315"/>
    <property type="project" value="WormBase"/>
</dbReference>
<dbReference type="GO" id="GO:0110011">
    <property type="term" value="P:regulation of basement membrane organization"/>
    <property type="evidence" value="ECO:0000315"/>
    <property type="project" value="UniProtKB"/>
</dbReference>
<dbReference type="GO" id="GO:0017015">
    <property type="term" value="P:regulation of transforming growth factor beta receptor signaling pathway"/>
    <property type="evidence" value="ECO:0000316"/>
    <property type="project" value="WormBase"/>
</dbReference>
<dbReference type="FunFam" id="1.10.472.100:FF:000001">
    <property type="entry name" value="Presenilin"/>
    <property type="match status" value="1"/>
</dbReference>
<dbReference type="Gene3D" id="1.10.472.100">
    <property type="entry name" value="Presenilin"/>
    <property type="match status" value="1"/>
</dbReference>
<dbReference type="InterPro" id="IPR001686">
    <property type="entry name" value="Pept_A22A_Ceel"/>
</dbReference>
<dbReference type="InterPro" id="IPR001108">
    <property type="entry name" value="Peptidase_A22A"/>
</dbReference>
<dbReference type="InterPro" id="IPR006639">
    <property type="entry name" value="Preselin/SPP"/>
</dbReference>
<dbReference type="InterPro" id="IPR042524">
    <property type="entry name" value="Presenilin_C"/>
</dbReference>
<dbReference type="PANTHER" id="PTHR10202">
    <property type="entry name" value="PRESENILIN"/>
    <property type="match status" value="1"/>
</dbReference>
<dbReference type="PANTHER" id="PTHR10202:SF13">
    <property type="entry name" value="PRESENILIN HOMOLOG"/>
    <property type="match status" value="1"/>
</dbReference>
<dbReference type="Pfam" id="PF01080">
    <property type="entry name" value="Presenilin"/>
    <property type="match status" value="1"/>
</dbReference>
<dbReference type="PRINTS" id="PR01072">
    <property type="entry name" value="PRESENILIN"/>
</dbReference>
<dbReference type="PRINTS" id="PR01075">
    <property type="entry name" value="PRESENILNSEL"/>
</dbReference>
<dbReference type="SMART" id="SM00730">
    <property type="entry name" value="PSN"/>
    <property type="match status" value="1"/>
</dbReference>
<organism>
    <name type="scientific">Caenorhabditis elegans</name>
    <dbReference type="NCBI Taxonomy" id="6239"/>
    <lineage>
        <taxon>Eukaryota</taxon>
        <taxon>Metazoa</taxon>
        <taxon>Ecdysozoa</taxon>
        <taxon>Nematoda</taxon>
        <taxon>Chromadorea</taxon>
        <taxon>Rhabditida</taxon>
        <taxon>Rhabditina</taxon>
        <taxon>Rhabditomorpha</taxon>
        <taxon>Rhabditoidea</taxon>
        <taxon>Rhabditidae</taxon>
        <taxon>Peloderinae</taxon>
        <taxon>Caenorhabditis</taxon>
    </lineage>
</organism>
<evidence type="ECO:0000250" key="1"/>
<evidence type="ECO:0000255" key="2"/>
<evidence type="ECO:0000256" key="3">
    <source>
        <dbReference type="SAM" id="MobiDB-lite"/>
    </source>
</evidence>
<evidence type="ECO:0000269" key="4">
    <source>
    </source>
</evidence>
<evidence type="ECO:0000269" key="5">
    <source>
    </source>
</evidence>
<evidence type="ECO:0000269" key="6">
    <source>
    </source>
</evidence>
<evidence type="ECO:0000269" key="7">
    <source>
    </source>
</evidence>
<evidence type="ECO:0000269" key="8">
    <source>
    </source>
</evidence>
<evidence type="ECO:0000269" key="9">
    <source>
    </source>
</evidence>
<evidence type="ECO:0000305" key="10"/>
<evidence type="ECO:0000312" key="11">
    <source>
        <dbReference type="WormBase" id="F35H12.3"/>
    </source>
</evidence>
<accession>P52166</accession>
<accession>Q20076</accession>
<accession>Q9U9C7</accession>